<evidence type="ECO:0000255" key="1">
    <source>
        <dbReference type="HAMAP-Rule" id="MF_01315"/>
    </source>
</evidence>
<evidence type="ECO:0000256" key="2">
    <source>
        <dbReference type="SAM" id="MobiDB-lite"/>
    </source>
</evidence>
<evidence type="ECO:0000305" key="3"/>
<organism>
    <name type="scientific">Chlorobium luteolum (strain DSM 273 / BCRC 81028 / 2530)</name>
    <name type="common">Pelodictyon luteolum</name>
    <dbReference type="NCBI Taxonomy" id="319225"/>
    <lineage>
        <taxon>Bacteria</taxon>
        <taxon>Pseudomonadati</taxon>
        <taxon>Chlorobiota</taxon>
        <taxon>Chlorobiia</taxon>
        <taxon>Chlorobiales</taxon>
        <taxon>Chlorobiaceae</taxon>
        <taxon>Chlorobium/Pelodictyon group</taxon>
        <taxon>Pelodictyon</taxon>
    </lineage>
</organism>
<sequence>MRIAGVNLPLNKHAVIALTHVYGIGNTTAKTILKRAGIAPDRKISDLNDAEAHAIRELVAEEYKVEGQARGEQQLAIKRLMDIGCYRGLRHRRSLPVRGQNTQTNARTRKGKRKTVAGKKKAARK</sequence>
<accession>Q3B6D9</accession>
<reference key="1">
    <citation type="submission" date="2005-08" db="EMBL/GenBank/DDBJ databases">
        <title>Complete sequence of Pelodictyon luteolum DSM 273.</title>
        <authorList>
            <consortium name="US DOE Joint Genome Institute"/>
            <person name="Copeland A."/>
            <person name="Lucas S."/>
            <person name="Lapidus A."/>
            <person name="Barry K."/>
            <person name="Detter J.C."/>
            <person name="Glavina T."/>
            <person name="Hammon N."/>
            <person name="Israni S."/>
            <person name="Pitluck S."/>
            <person name="Bryant D."/>
            <person name="Schmutz J."/>
            <person name="Larimer F."/>
            <person name="Land M."/>
            <person name="Kyrpides N."/>
            <person name="Ivanova N."/>
            <person name="Richardson P."/>
        </authorList>
    </citation>
    <scope>NUCLEOTIDE SEQUENCE [LARGE SCALE GENOMIC DNA]</scope>
    <source>
        <strain>DSM 273 / BCRC 81028 / 2530</strain>
    </source>
</reference>
<gene>
    <name evidence="1" type="primary">rpsM</name>
    <name type="ordered locus">Plut_0204</name>
</gene>
<keyword id="KW-1185">Reference proteome</keyword>
<keyword id="KW-0687">Ribonucleoprotein</keyword>
<keyword id="KW-0689">Ribosomal protein</keyword>
<keyword id="KW-0694">RNA-binding</keyword>
<keyword id="KW-0699">rRNA-binding</keyword>
<keyword id="KW-0820">tRNA-binding</keyword>
<feature type="chain" id="PRO_0000230540" description="Small ribosomal subunit protein uS13">
    <location>
        <begin position="1"/>
        <end position="125"/>
    </location>
</feature>
<feature type="region of interest" description="Disordered" evidence="2">
    <location>
        <begin position="92"/>
        <end position="125"/>
    </location>
</feature>
<feature type="compositionally biased region" description="Basic residues" evidence="2">
    <location>
        <begin position="107"/>
        <end position="125"/>
    </location>
</feature>
<protein>
    <recommendedName>
        <fullName evidence="1">Small ribosomal subunit protein uS13</fullName>
    </recommendedName>
    <alternativeName>
        <fullName evidence="3">30S ribosomal protein S13</fullName>
    </alternativeName>
</protein>
<name>RS13_CHLL3</name>
<dbReference type="EMBL" id="CP000096">
    <property type="protein sequence ID" value="ABB23092.1"/>
    <property type="molecule type" value="Genomic_DNA"/>
</dbReference>
<dbReference type="RefSeq" id="WP_011356967.1">
    <property type="nucleotide sequence ID" value="NC_007512.1"/>
</dbReference>
<dbReference type="SMR" id="Q3B6D9"/>
<dbReference type="STRING" id="319225.Plut_0204"/>
<dbReference type="KEGG" id="plt:Plut_0204"/>
<dbReference type="eggNOG" id="COG0099">
    <property type="taxonomic scope" value="Bacteria"/>
</dbReference>
<dbReference type="HOGENOM" id="CLU_103849_1_2_10"/>
<dbReference type="OrthoDB" id="9803610at2"/>
<dbReference type="Proteomes" id="UP000002709">
    <property type="component" value="Chromosome"/>
</dbReference>
<dbReference type="GO" id="GO:0005829">
    <property type="term" value="C:cytosol"/>
    <property type="evidence" value="ECO:0007669"/>
    <property type="project" value="TreeGrafter"/>
</dbReference>
<dbReference type="GO" id="GO:0015935">
    <property type="term" value="C:small ribosomal subunit"/>
    <property type="evidence" value="ECO:0007669"/>
    <property type="project" value="TreeGrafter"/>
</dbReference>
<dbReference type="GO" id="GO:0019843">
    <property type="term" value="F:rRNA binding"/>
    <property type="evidence" value="ECO:0007669"/>
    <property type="project" value="UniProtKB-UniRule"/>
</dbReference>
<dbReference type="GO" id="GO:0003735">
    <property type="term" value="F:structural constituent of ribosome"/>
    <property type="evidence" value="ECO:0007669"/>
    <property type="project" value="InterPro"/>
</dbReference>
<dbReference type="GO" id="GO:0000049">
    <property type="term" value="F:tRNA binding"/>
    <property type="evidence" value="ECO:0007669"/>
    <property type="project" value="UniProtKB-UniRule"/>
</dbReference>
<dbReference type="GO" id="GO:0006412">
    <property type="term" value="P:translation"/>
    <property type="evidence" value="ECO:0007669"/>
    <property type="project" value="UniProtKB-UniRule"/>
</dbReference>
<dbReference type="FunFam" id="1.10.8.50:FF:000001">
    <property type="entry name" value="30S ribosomal protein S13"/>
    <property type="match status" value="1"/>
</dbReference>
<dbReference type="FunFam" id="4.10.910.10:FF:000001">
    <property type="entry name" value="30S ribosomal protein S13"/>
    <property type="match status" value="1"/>
</dbReference>
<dbReference type="Gene3D" id="1.10.8.50">
    <property type="match status" value="1"/>
</dbReference>
<dbReference type="Gene3D" id="4.10.910.10">
    <property type="entry name" value="30s ribosomal protein s13, domain 2"/>
    <property type="match status" value="1"/>
</dbReference>
<dbReference type="HAMAP" id="MF_01315">
    <property type="entry name" value="Ribosomal_uS13"/>
    <property type="match status" value="1"/>
</dbReference>
<dbReference type="InterPro" id="IPR027437">
    <property type="entry name" value="Rbsml_uS13_C"/>
</dbReference>
<dbReference type="InterPro" id="IPR001892">
    <property type="entry name" value="Ribosomal_uS13"/>
</dbReference>
<dbReference type="InterPro" id="IPR010979">
    <property type="entry name" value="Ribosomal_uS13-like_H2TH"/>
</dbReference>
<dbReference type="InterPro" id="IPR019980">
    <property type="entry name" value="Ribosomal_uS13_bac-type"/>
</dbReference>
<dbReference type="InterPro" id="IPR018269">
    <property type="entry name" value="Ribosomal_uS13_CS"/>
</dbReference>
<dbReference type="NCBIfam" id="TIGR03631">
    <property type="entry name" value="uS13_bact"/>
    <property type="match status" value="1"/>
</dbReference>
<dbReference type="PANTHER" id="PTHR10871">
    <property type="entry name" value="30S RIBOSOMAL PROTEIN S13/40S RIBOSOMAL PROTEIN S18"/>
    <property type="match status" value="1"/>
</dbReference>
<dbReference type="PANTHER" id="PTHR10871:SF1">
    <property type="entry name" value="SMALL RIBOSOMAL SUBUNIT PROTEIN US13M"/>
    <property type="match status" value="1"/>
</dbReference>
<dbReference type="Pfam" id="PF00416">
    <property type="entry name" value="Ribosomal_S13"/>
    <property type="match status" value="1"/>
</dbReference>
<dbReference type="PIRSF" id="PIRSF002134">
    <property type="entry name" value="Ribosomal_S13"/>
    <property type="match status" value="1"/>
</dbReference>
<dbReference type="SUPFAM" id="SSF46946">
    <property type="entry name" value="S13-like H2TH domain"/>
    <property type="match status" value="1"/>
</dbReference>
<dbReference type="PROSITE" id="PS00646">
    <property type="entry name" value="RIBOSOMAL_S13_1"/>
    <property type="match status" value="1"/>
</dbReference>
<dbReference type="PROSITE" id="PS50159">
    <property type="entry name" value="RIBOSOMAL_S13_2"/>
    <property type="match status" value="1"/>
</dbReference>
<comment type="function">
    <text evidence="1">Located at the top of the head of the 30S subunit, it contacts several helices of the 16S rRNA. In the 70S ribosome it contacts the 23S rRNA (bridge B1a) and protein L5 of the 50S subunit (bridge B1b), connecting the 2 subunits; these bridges are implicated in subunit movement. Contacts the tRNAs in the A and P-sites.</text>
</comment>
<comment type="subunit">
    <text evidence="1">Part of the 30S ribosomal subunit. Forms a loose heterodimer with protein S19. Forms two bridges to the 50S subunit in the 70S ribosome.</text>
</comment>
<comment type="similarity">
    <text evidence="1">Belongs to the universal ribosomal protein uS13 family.</text>
</comment>
<proteinExistence type="inferred from homology"/>